<gene>
    <name evidence="1" type="primary">ispE</name>
    <name type="ordered locus">Cphy_3793</name>
</gene>
<keyword id="KW-0067">ATP-binding</keyword>
<keyword id="KW-0414">Isoprene biosynthesis</keyword>
<keyword id="KW-0418">Kinase</keyword>
<keyword id="KW-0547">Nucleotide-binding</keyword>
<keyword id="KW-1185">Reference proteome</keyword>
<keyword id="KW-0808">Transferase</keyword>
<sequence>MDIISLKAYAKINLALDVIGKRPNGYHDVRMIMQTIKLYDKITIKPTTNPDITIKTNLHFLPTNENNIVYTACKLFKDTFQISDGFYINLEKRIPVAAGMAGGSSDAAATLFGLNELFQTNQSLEDLMKLGVKLGADVPYCLLRGTALSEGIGEVLTPLPPAPNCYCLIVKPPVSVSTKFVYENLKLDENTKHPNIDGMVEAIEKQDLHQMSSLVSNVLESVTIKHHPEIERIKMDLLSHGALNALMSGSGPTVFALFDNQKAAERAFYEYKVGPYGKQTFLTRFFESKNV</sequence>
<evidence type="ECO:0000255" key="1">
    <source>
        <dbReference type="HAMAP-Rule" id="MF_00061"/>
    </source>
</evidence>
<reference key="1">
    <citation type="submission" date="2007-11" db="EMBL/GenBank/DDBJ databases">
        <title>Complete genome sequence of Clostridium phytofermentans ISDg.</title>
        <authorList>
            <person name="Leschine S.B."/>
            <person name="Warnick T.A."/>
            <person name="Blanchard J.L."/>
            <person name="Schnell D.J."/>
            <person name="Petit E.L."/>
            <person name="LaTouf W.G."/>
            <person name="Copeland A."/>
            <person name="Lucas S."/>
            <person name="Lapidus A."/>
            <person name="Barry K."/>
            <person name="Glavina del Rio T."/>
            <person name="Dalin E."/>
            <person name="Tice H."/>
            <person name="Pitluck S."/>
            <person name="Kiss H."/>
            <person name="Brettin T."/>
            <person name="Bruce D."/>
            <person name="Detter J.C."/>
            <person name="Han C."/>
            <person name="Kuske C."/>
            <person name="Schmutz J."/>
            <person name="Larimer F."/>
            <person name="Land M."/>
            <person name="Hauser L."/>
            <person name="Kyrpides N."/>
            <person name="Kim E.A."/>
            <person name="Richardson P."/>
        </authorList>
    </citation>
    <scope>NUCLEOTIDE SEQUENCE [LARGE SCALE GENOMIC DNA]</scope>
    <source>
        <strain>ATCC 700394 / DSM 18823 / ISDg</strain>
    </source>
</reference>
<protein>
    <recommendedName>
        <fullName evidence="1">4-diphosphocytidyl-2-C-methyl-D-erythritol kinase</fullName>
        <shortName evidence="1">CMK</shortName>
        <ecNumber evidence="1">2.7.1.148</ecNumber>
    </recommendedName>
    <alternativeName>
        <fullName evidence="1">4-(cytidine-5'-diphospho)-2-C-methyl-D-erythritol kinase</fullName>
    </alternativeName>
</protein>
<organism>
    <name type="scientific">Lachnoclostridium phytofermentans (strain ATCC 700394 / DSM 18823 / ISDg)</name>
    <name type="common">Clostridium phytofermentans</name>
    <dbReference type="NCBI Taxonomy" id="357809"/>
    <lineage>
        <taxon>Bacteria</taxon>
        <taxon>Bacillati</taxon>
        <taxon>Bacillota</taxon>
        <taxon>Clostridia</taxon>
        <taxon>Lachnospirales</taxon>
        <taxon>Lachnospiraceae</taxon>
    </lineage>
</organism>
<accession>A9KKE9</accession>
<dbReference type="EC" id="2.7.1.148" evidence="1"/>
<dbReference type="EMBL" id="CP000885">
    <property type="protein sequence ID" value="ABX44140.1"/>
    <property type="molecule type" value="Genomic_DNA"/>
</dbReference>
<dbReference type="RefSeq" id="WP_012201788.1">
    <property type="nucleotide sequence ID" value="NC_010001.1"/>
</dbReference>
<dbReference type="SMR" id="A9KKE9"/>
<dbReference type="STRING" id="357809.Cphy_3793"/>
<dbReference type="KEGG" id="cpy:Cphy_3793"/>
<dbReference type="eggNOG" id="COG1947">
    <property type="taxonomic scope" value="Bacteria"/>
</dbReference>
<dbReference type="HOGENOM" id="CLU_053057_1_1_9"/>
<dbReference type="OrthoDB" id="9809438at2"/>
<dbReference type="UniPathway" id="UPA00056">
    <property type="reaction ID" value="UER00094"/>
</dbReference>
<dbReference type="Proteomes" id="UP000000370">
    <property type="component" value="Chromosome"/>
</dbReference>
<dbReference type="GO" id="GO:0050515">
    <property type="term" value="F:4-(cytidine 5'-diphospho)-2-C-methyl-D-erythritol kinase activity"/>
    <property type="evidence" value="ECO:0007669"/>
    <property type="project" value="UniProtKB-UniRule"/>
</dbReference>
<dbReference type="GO" id="GO:0005524">
    <property type="term" value="F:ATP binding"/>
    <property type="evidence" value="ECO:0007669"/>
    <property type="project" value="UniProtKB-UniRule"/>
</dbReference>
<dbReference type="GO" id="GO:0019288">
    <property type="term" value="P:isopentenyl diphosphate biosynthetic process, methylerythritol 4-phosphate pathway"/>
    <property type="evidence" value="ECO:0007669"/>
    <property type="project" value="UniProtKB-UniRule"/>
</dbReference>
<dbReference type="GO" id="GO:0016114">
    <property type="term" value="P:terpenoid biosynthetic process"/>
    <property type="evidence" value="ECO:0007669"/>
    <property type="project" value="InterPro"/>
</dbReference>
<dbReference type="Gene3D" id="3.30.230.10">
    <property type="match status" value="1"/>
</dbReference>
<dbReference type="Gene3D" id="3.30.70.890">
    <property type="entry name" value="GHMP kinase, C-terminal domain"/>
    <property type="match status" value="1"/>
</dbReference>
<dbReference type="HAMAP" id="MF_00061">
    <property type="entry name" value="IspE"/>
    <property type="match status" value="1"/>
</dbReference>
<dbReference type="InterPro" id="IPR013750">
    <property type="entry name" value="GHMP_kinase_C_dom"/>
</dbReference>
<dbReference type="InterPro" id="IPR036554">
    <property type="entry name" value="GHMP_kinase_C_sf"/>
</dbReference>
<dbReference type="InterPro" id="IPR006204">
    <property type="entry name" value="GHMP_kinase_N_dom"/>
</dbReference>
<dbReference type="InterPro" id="IPR004424">
    <property type="entry name" value="IspE"/>
</dbReference>
<dbReference type="InterPro" id="IPR020568">
    <property type="entry name" value="Ribosomal_Su5_D2-typ_SF"/>
</dbReference>
<dbReference type="InterPro" id="IPR014721">
    <property type="entry name" value="Ribsml_uS5_D2-typ_fold_subgr"/>
</dbReference>
<dbReference type="NCBIfam" id="TIGR00154">
    <property type="entry name" value="ispE"/>
    <property type="match status" value="1"/>
</dbReference>
<dbReference type="NCBIfam" id="NF011202">
    <property type="entry name" value="PRK14608.1"/>
    <property type="match status" value="1"/>
</dbReference>
<dbReference type="PANTHER" id="PTHR43527">
    <property type="entry name" value="4-DIPHOSPHOCYTIDYL-2-C-METHYL-D-ERYTHRITOL KINASE, CHLOROPLASTIC"/>
    <property type="match status" value="1"/>
</dbReference>
<dbReference type="PANTHER" id="PTHR43527:SF2">
    <property type="entry name" value="4-DIPHOSPHOCYTIDYL-2-C-METHYL-D-ERYTHRITOL KINASE, CHLOROPLASTIC"/>
    <property type="match status" value="1"/>
</dbReference>
<dbReference type="Pfam" id="PF08544">
    <property type="entry name" value="GHMP_kinases_C"/>
    <property type="match status" value="1"/>
</dbReference>
<dbReference type="Pfam" id="PF00288">
    <property type="entry name" value="GHMP_kinases_N"/>
    <property type="match status" value="1"/>
</dbReference>
<dbReference type="PIRSF" id="PIRSF010376">
    <property type="entry name" value="IspE"/>
    <property type="match status" value="1"/>
</dbReference>
<dbReference type="SUPFAM" id="SSF55060">
    <property type="entry name" value="GHMP Kinase, C-terminal domain"/>
    <property type="match status" value="1"/>
</dbReference>
<dbReference type="SUPFAM" id="SSF54211">
    <property type="entry name" value="Ribosomal protein S5 domain 2-like"/>
    <property type="match status" value="1"/>
</dbReference>
<proteinExistence type="inferred from homology"/>
<comment type="function">
    <text evidence="1">Catalyzes the phosphorylation of the position 2 hydroxy group of 4-diphosphocytidyl-2C-methyl-D-erythritol.</text>
</comment>
<comment type="catalytic activity">
    <reaction evidence="1">
        <text>4-CDP-2-C-methyl-D-erythritol + ATP = 4-CDP-2-C-methyl-D-erythritol 2-phosphate + ADP + H(+)</text>
        <dbReference type="Rhea" id="RHEA:18437"/>
        <dbReference type="ChEBI" id="CHEBI:15378"/>
        <dbReference type="ChEBI" id="CHEBI:30616"/>
        <dbReference type="ChEBI" id="CHEBI:57823"/>
        <dbReference type="ChEBI" id="CHEBI:57919"/>
        <dbReference type="ChEBI" id="CHEBI:456216"/>
        <dbReference type="EC" id="2.7.1.148"/>
    </reaction>
</comment>
<comment type="pathway">
    <text evidence="1">Isoprenoid biosynthesis; isopentenyl diphosphate biosynthesis via DXP pathway; isopentenyl diphosphate from 1-deoxy-D-xylulose 5-phosphate: step 3/6.</text>
</comment>
<comment type="similarity">
    <text evidence="1">Belongs to the GHMP kinase family. IspE subfamily.</text>
</comment>
<name>ISPE_LACP7</name>
<feature type="chain" id="PRO_1000075045" description="4-diphosphocytidyl-2-C-methyl-D-erythritol kinase">
    <location>
        <begin position="1"/>
        <end position="291"/>
    </location>
</feature>
<feature type="active site" evidence="1">
    <location>
        <position position="11"/>
    </location>
</feature>
<feature type="active site" evidence="1">
    <location>
        <position position="137"/>
    </location>
</feature>
<feature type="binding site" evidence="1">
    <location>
        <begin position="95"/>
        <end position="105"/>
    </location>
    <ligand>
        <name>ATP</name>
        <dbReference type="ChEBI" id="CHEBI:30616"/>
    </ligand>
</feature>